<evidence type="ECO:0000255" key="1">
    <source>
        <dbReference type="HAMAP-Rule" id="MF_00134"/>
    </source>
</evidence>
<keyword id="KW-0028">Amino-acid biosynthesis</keyword>
<keyword id="KW-0057">Aromatic amino acid biosynthesis</keyword>
<keyword id="KW-0210">Decarboxylase</keyword>
<keyword id="KW-0456">Lyase</keyword>
<keyword id="KW-0822">Tryptophan biosynthesis</keyword>
<proteinExistence type="inferred from homology"/>
<gene>
    <name evidence="1" type="primary">trpC</name>
    <name type="ordered locus">Bcep1808_0508</name>
</gene>
<protein>
    <recommendedName>
        <fullName evidence="1">Indole-3-glycerol phosphate synthase</fullName>
        <shortName evidence="1">IGPS</shortName>
        <ecNumber evidence="1">4.1.1.48</ecNumber>
    </recommendedName>
</protein>
<sequence>MSDILDRIIAVKRDEVAAAMRSTPLEALKLEASARDLRDFVGALRAKQAAGQPAVIAEVKKASPSKGVLREHFVPADIARSYATHGAACLSVLTDEQFFQGSVRYLEEARAACTLPVLRKDFIVDAYQILEARAMGADAILLIAAALDTPLMQELEAYAHSLGLAVLVEVHDRNEMEQALTLKTPLVGINNRNLRTFETTIQTTLDMLDMVPADRMVVTESGILSRADVDTMRAANVNAFLVGEAFMRADEPGAALARMFF</sequence>
<organism>
    <name type="scientific">Burkholderia vietnamiensis (strain G4 / LMG 22486)</name>
    <name type="common">Burkholderia cepacia (strain R1808)</name>
    <dbReference type="NCBI Taxonomy" id="269482"/>
    <lineage>
        <taxon>Bacteria</taxon>
        <taxon>Pseudomonadati</taxon>
        <taxon>Pseudomonadota</taxon>
        <taxon>Betaproteobacteria</taxon>
        <taxon>Burkholderiales</taxon>
        <taxon>Burkholderiaceae</taxon>
        <taxon>Burkholderia</taxon>
        <taxon>Burkholderia cepacia complex</taxon>
    </lineage>
</organism>
<comment type="catalytic activity">
    <reaction evidence="1">
        <text>1-(2-carboxyphenylamino)-1-deoxy-D-ribulose 5-phosphate + H(+) = (1S,2R)-1-C-(indol-3-yl)glycerol 3-phosphate + CO2 + H2O</text>
        <dbReference type="Rhea" id="RHEA:23476"/>
        <dbReference type="ChEBI" id="CHEBI:15377"/>
        <dbReference type="ChEBI" id="CHEBI:15378"/>
        <dbReference type="ChEBI" id="CHEBI:16526"/>
        <dbReference type="ChEBI" id="CHEBI:58613"/>
        <dbReference type="ChEBI" id="CHEBI:58866"/>
        <dbReference type="EC" id="4.1.1.48"/>
    </reaction>
</comment>
<comment type="pathway">
    <text evidence="1">Amino-acid biosynthesis; L-tryptophan biosynthesis; L-tryptophan from chorismate: step 4/5.</text>
</comment>
<comment type="similarity">
    <text evidence="1">Belongs to the TrpC family.</text>
</comment>
<accession>A4JB67</accession>
<name>TRPC_BURVG</name>
<dbReference type="EC" id="4.1.1.48" evidence="1"/>
<dbReference type="EMBL" id="CP000614">
    <property type="protein sequence ID" value="ABO53520.1"/>
    <property type="molecule type" value="Genomic_DNA"/>
</dbReference>
<dbReference type="SMR" id="A4JB67"/>
<dbReference type="KEGG" id="bvi:Bcep1808_0508"/>
<dbReference type="eggNOG" id="COG0134">
    <property type="taxonomic scope" value="Bacteria"/>
</dbReference>
<dbReference type="HOGENOM" id="CLU_034247_2_0_4"/>
<dbReference type="UniPathway" id="UPA00035">
    <property type="reaction ID" value="UER00043"/>
</dbReference>
<dbReference type="Proteomes" id="UP000002287">
    <property type="component" value="Chromosome 1"/>
</dbReference>
<dbReference type="GO" id="GO:0004425">
    <property type="term" value="F:indole-3-glycerol-phosphate synthase activity"/>
    <property type="evidence" value="ECO:0007669"/>
    <property type="project" value="UniProtKB-UniRule"/>
</dbReference>
<dbReference type="GO" id="GO:0004640">
    <property type="term" value="F:phosphoribosylanthranilate isomerase activity"/>
    <property type="evidence" value="ECO:0007669"/>
    <property type="project" value="TreeGrafter"/>
</dbReference>
<dbReference type="GO" id="GO:0000162">
    <property type="term" value="P:L-tryptophan biosynthetic process"/>
    <property type="evidence" value="ECO:0007669"/>
    <property type="project" value="UniProtKB-UniRule"/>
</dbReference>
<dbReference type="CDD" id="cd00331">
    <property type="entry name" value="IGPS"/>
    <property type="match status" value="1"/>
</dbReference>
<dbReference type="FunFam" id="3.20.20.70:FF:000024">
    <property type="entry name" value="Indole-3-glycerol phosphate synthase"/>
    <property type="match status" value="1"/>
</dbReference>
<dbReference type="Gene3D" id="3.20.20.70">
    <property type="entry name" value="Aldolase class I"/>
    <property type="match status" value="1"/>
</dbReference>
<dbReference type="HAMAP" id="MF_00134_B">
    <property type="entry name" value="IGPS_B"/>
    <property type="match status" value="1"/>
</dbReference>
<dbReference type="InterPro" id="IPR013785">
    <property type="entry name" value="Aldolase_TIM"/>
</dbReference>
<dbReference type="InterPro" id="IPR045186">
    <property type="entry name" value="Indole-3-glycerol_P_synth"/>
</dbReference>
<dbReference type="InterPro" id="IPR013798">
    <property type="entry name" value="Indole-3-glycerol_P_synth_dom"/>
</dbReference>
<dbReference type="InterPro" id="IPR001468">
    <property type="entry name" value="Indole-3-GlycerolPSynthase_CS"/>
</dbReference>
<dbReference type="InterPro" id="IPR011060">
    <property type="entry name" value="RibuloseP-bd_barrel"/>
</dbReference>
<dbReference type="NCBIfam" id="NF001373">
    <property type="entry name" value="PRK00278.1-6"/>
    <property type="match status" value="1"/>
</dbReference>
<dbReference type="NCBIfam" id="NF001377">
    <property type="entry name" value="PRK00278.2-4"/>
    <property type="match status" value="1"/>
</dbReference>
<dbReference type="PANTHER" id="PTHR22854:SF2">
    <property type="entry name" value="INDOLE-3-GLYCEROL-PHOSPHATE SYNTHASE"/>
    <property type="match status" value="1"/>
</dbReference>
<dbReference type="PANTHER" id="PTHR22854">
    <property type="entry name" value="TRYPTOPHAN BIOSYNTHESIS PROTEIN"/>
    <property type="match status" value="1"/>
</dbReference>
<dbReference type="Pfam" id="PF00218">
    <property type="entry name" value="IGPS"/>
    <property type="match status" value="1"/>
</dbReference>
<dbReference type="SUPFAM" id="SSF51366">
    <property type="entry name" value="Ribulose-phoshate binding barrel"/>
    <property type="match status" value="1"/>
</dbReference>
<dbReference type="PROSITE" id="PS00614">
    <property type="entry name" value="IGPS"/>
    <property type="match status" value="1"/>
</dbReference>
<reference key="1">
    <citation type="submission" date="2007-03" db="EMBL/GenBank/DDBJ databases">
        <title>Complete sequence of chromosome 1 of Burkholderia vietnamiensis G4.</title>
        <authorList>
            <consortium name="US DOE Joint Genome Institute"/>
            <person name="Copeland A."/>
            <person name="Lucas S."/>
            <person name="Lapidus A."/>
            <person name="Barry K."/>
            <person name="Detter J.C."/>
            <person name="Glavina del Rio T."/>
            <person name="Hammon N."/>
            <person name="Israni S."/>
            <person name="Dalin E."/>
            <person name="Tice H."/>
            <person name="Pitluck S."/>
            <person name="Chain P."/>
            <person name="Malfatti S."/>
            <person name="Shin M."/>
            <person name="Vergez L."/>
            <person name="Schmutz J."/>
            <person name="Larimer F."/>
            <person name="Land M."/>
            <person name="Hauser L."/>
            <person name="Kyrpides N."/>
            <person name="Tiedje J."/>
            <person name="Richardson P."/>
        </authorList>
    </citation>
    <scope>NUCLEOTIDE SEQUENCE [LARGE SCALE GENOMIC DNA]</scope>
    <source>
        <strain>G4 / LMG 22486</strain>
    </source>
</reference>
<feature type="chain" id="PRO_1000018464" description="Indole-3-glycerol phosphate synthase">
    <location>
        <begin position="1"/>
        <end position="261"/>
    </location>
</feature>